<dbReference type="EC" id="2.7.2.11" evidence="1"/>
<dbReference type="EMBL" id="CP000305">
    <property type="protein sequence ID" value="ABG17203.1"/>
    <property type="molecule type" value="Genomic_DNA"/>
</dbReference>
<dbReference type="EMBL" id="ACNQ01000008">
    <property type="protein sequence ID" value="EEO77283.1"/>
    <property type="molecule type" value="Genomic_DNA"/>
</dbReference>
<dbReference type="RefSeq" id="WP_002208701.1">
    <property type="nucleotide sequence ID" value="NZ_ACNQ01000008.1"/>
</dbReference>
<dbReference type="SMR" id="Q1CLC7"/>
<dbReference type="GeneID" id="57975496"/>
<dbReference type="KEGG" id="ypn:YPN_0871"/>
<dbReference type="HOGENOM" id="CLU_025400_2_0_6"/>
<dbReference type="UniPathway" id="UPA00098">
    <property type="reaction ID" value="UER00359"/>
</dbReference>
<dbReference type="Proteomes" id="UP000008936">
    <property type="component" value="Chromosome"/>
</dbReference>
<dbReference type="GO" id="GO:0005829">
    <property type="term" value="C:cytosol"/>
    <property type="evidence" value="ECO:0007669"/>
    <property type="project" value="TreeGrafter"/>
</dbReference>
<dbReference type="GO" id="GO:0005524">
    <property type="term" value="F:ATP binding"/>
    <property type="evidence" value="ECO:0007669"/>
    <property type="project" value="UniProtKB-KW"/>
</dbReference>
<dbReference type="GO" id="GO:0004349">
    <property type="term" value="F:glutamate 5-kinase activity"/>
    <property type="evidence" value="ECO:0007669"/>
    <property type="project" value="UniProtKB-UniRule"/>
</dbReference>
<dbReference type="GO" id="GO:0003723">
    <property type="term" value="F:RNA binding"/>
    <property type="evidence" value="ECO:0007669"/>
    <property type="project" value="InterPro"/>
</dbReference>
<dbReference type="GO" id="GO:0055129">
    <property type="term" value="P:L-proline biosynthetic process"/>
    <property type="evidence" value="ECO:0007669"/>
    <property type="project" value="UniProtKB-UniRule"/>
</dbReference>
<dbReference type="CDD" id="cd04242">
    <property type="entry name" value="AAK_G5K_ProB"/>
    <property type="match status" value="1"/>
</dbReference>
<dbReference type="CDD" id="cd21157">
    <property type="entry name" value="PUA_G5K"/>
    <property type="match status" value="1"/>
</dbReference>
<dbReference type="FunFam" id="2.30.130.10:FF:000003">
    <property type="entry name" value="Glutamate 5-kinase"/>
    <property type="match status" value="1"/>
</dbReference>
<dbReference type="FunFam" id="3.40.1160.10:FF:000006">
    <property type="entry name" value="Glutamate 5-kinase"/>
    <property type="match status" value="1"/>
</dbReference>
<dbReference type="Gene3D" id="3.40.1160.10">
    <property type="entry name" value="Acetylglutamate kinase-like"/>
    <property type="match status" value="2"/>
</dbReference>
<dbReference type="Gene3D" id="2.30.130.10">
    <property type="entry name" value="PUA domain"/>
    <property type="match status" value="1"/>
</dbReference>
<dbReference type="HAMAP" id="MF_00456">
    <property type="entry name" value="ProB"/>
    <property type="match status" value="1"/>
</dbReference>
<dbReference type="InterPro" id="IPR036393">
    <property type="entry name" value="AceGlu_kinase-like_sf"/>
</dbReference>
<dbReference type="InterPro" id="IPR001048">
    <property type="entry name" value="Asp/Glu/Uridylate_kinase"/>
</dbReference>
<dbReference type="InterPro" id="IPR041739">
    <property type="entry name" value="G5K_ProB"/>
</dbReference>
<dbReference type="InterPro" id="IPR001057">
    <property type="entry name" value="Glu/AcGlu_kinase"/>
</dbReference>
<dbReference type="InterPro" id="IPR011529">
    <property type="entry name" value="Glu_5kinase"/>
</dbReference>
<dbReference type="InterPro" id="IPR005715">
    <property type="entry name" value="Glu_5kinase/COase_Synthase"/>
</dbReference>
<dbReference type="InterPro" id="IPR019797">
    <property type="entry name" value="Glutamate_5-kinase_CS"/>
</dbReference>
<dbReference type="InterPro" id="IPR002478">
    <property type="entry name" value="PUA"/>
</dbReference>
<dbReference type="InterPro" id="IPR015947">
    <property type="entry name" value="PUA-like_sf"/>
</dbReference>
<dbReference type="InterPro" id="IPR036974">
    <property type="entry name" value="PUA_sf"/>
</dbReference>
<dbReference type="NCBIfam" id="TIGR01027">
    <property type="entry name" value="proB"/>
    <property type="match status" value="1"/>
</dbReference>
<dbReference type="PANTHER" id="PTHR43654">
    <property type="entry name" value="GLUTAMATE 5-KINASE"/>
    <property type="match status" value="1"/>
</dbReference>
<dbReference type="PANTHER" id="PTHR43654:SF1">
    <property type="entry name" value="ISOPENTENYL PHOSPHATE KINASE"/>
    <property type="match status" value="1"/>
</dbReference>
<dbReference type="Pfam" id="PF00696">
    <property type="entry name" value="AA_kinase"/>
    <property type="match status" value="1"/>
</dbReference>
<dbReference type="Pfam" id="PF01472">
    <property type="entry name" value="PUA"/>
    <property type="match status" value="1"/>
</dbReference>
<dbReference type="PIRSF" id="PIRSF000729">
    <property type="entry name" value="GK"/>
    <property type="match status" value="1"/>
</dbReference>
<dbReference type="PRINTS" id="PR00474">
    <property type="entry name" value="GLU5KINASE"/>
</dbReference>
<dbReference type="SMART" id="SM00359">
    <property type="entry name" value="PUA"/>
    <property type="match status" value="1"/>
</dbReference>
<dbReference type="SUPFAM" id="SSF53633">
    <property type="entry name" value="Carbamate kinase-like"/>
    <property type="match status" value="1"/>
</dbReference>
<dbReference type="SUPFAM" id="SSF88697">
    <property type="entry name" value="PUA domain-like"/>
    <property type="match status" value="1"/>
</dbReference>
<dbReference type="PROSITE" id="PS00902">
    <property type="entry name" value="GLUTAMATE_5_KINASE"/>
    <property type="match status" value="1"/>
</dbReference>
<dbReference type="PROSITE" id="PS50890">
    <property type="entry name" value="PUA"/>
    <property type="match status" value="1"/>
</dbReference>
<name>PROB_YERPN</name>
<feature type="chain" id="PRO_0000253015" description="Glutamate 5-kinase">
    <location>
        <begin position="1"/>
        <end position="367"/>
    </location>
</feature>
<feature type="domain" description="PUA" evidence="1">
    <location>
        <begin position="275"/>
        <end position="353"/>
    </location>
</feature>
<feature type="binding site" evidence="1">
    <location>
        <position position="10"/>
    </location>
    <ligand>
        <name>ATP</name>
        <dbReference type="ChEBI" id="CHEBI:30616"/>
    </ligand>
</feature>
<feature type="binding site" evidence="1">
    <location>
        <position position="50"/>
    </location>
    <ligand>
        <name>substrate</name>
    </ligand>
</feature>
<feature type="binding site" evidence="1">
    <location>
        <position position="137"/>
    </location>
    <ligand>
        <name>substrate</name>
    </ligand>
</feature>
<feature type="binding site" evidence="1">
    <location>
        <position position="149"/>
    </location>
    <ligand>
        <name>substrate</name>
    </ligand>
</feature>
<feature type="binding site" evidence="1">
    <location>
        <begin position="169"/>
        <end position="170"/>
    </location>
    <ligand>
        <name>ATP</name>
        <dbReference type="ChEBI" id="CHEBI:30616"/>
    </ligand>
</feature>
<feature type="binding site" evidence="1">
    <location>
        <begin position="211"/>
        <end position="217"/>
    </location>
    <ligand>
        <name>ATP</name>
        <dbReference type="ChEBI" id="CHEBI:30616"/>
    </ligand>
</feature>
<gene>
    <name evidence="1" type="primary">proB</name>
    <name type="ordered locus">YPN_0871</name>
    <name type="ORF">YP516_0942</name>
</gene>
<evidence type="ECO:0000255" key="1">
    <source>
        <dbReference type="HAMAP-Rule" id="MF_00456"/>
    </source>
</evidence>
<proteinExistence type="inferred from homology"/>
<protein>
    <recommendedName>
        <fullName evidence="1">Glutamate 5-kinase</fullName>
        <ecNumber evidence="1">2.7.2.11</ecNumber>
    </recommendedName>
    <alternativeName>
        <fullName evidence="1">Gamma-glutamyl kinase</fullName>
        <shortName evidence="1">GK</shortName>
    </alternativeName>
</protein>
<reference key="1">
    <citation type="journal article" date="2006" name="J. Bacteriol.">
        <title>Complete genome sequence of Yersinia pestis strains Antiqua and Nepal516: evidence of gene reduction in an emerging pathogen.</title>
        <authorList>
            <person name="Chain P.S.G."/>
            <person name="Hu P."/>
            <person name="Malfatti S.A."/>
            <person name="Radnedge L."/>
            <person name="Larimer F."/>
            <person name="Vergez L.M."/>
            <person name="Worsham P."/>
            <person name="Chu M.C."/>
            <person name="Andersen G.L."/>
        </authorList>
    </citation>
    <scope>NUCLEOTIDE SEQUENCE [LARGE SCALE GENOMIC DNA]</scope>
    <source>
        <strain>Nepal516</strain>
    </source>
</reference>
<reference key="2">
    <citation type="submission" date="2009-04" db="EMBL/GenBank/DDBJ databases">
        <title>Yersinia pestis Nepal516A whole genome shotgun sequencing project.</title>
        <authorList>
            <person name="Plunkett G. III"/>
            <person name="Anderson B.D."/>
            <person name="Baumler D.J."/>
            <person name="Burland V."/>
            <person name="Cabot E.L."/>
            <person name="Glasner J.D."/>
            <person name="Mau B."/>
            <person name="Neeno-Eckwall E."/>
            <person name="Perna N.T."/>
            <person name="Munk A.C."/>
            <person name="Tapia R."/>
            <person name="Green L.D."/>
            <person name="Rogers Y.C."/>
            <person name="Detter J.C."/>
            <person name="Bruce D.C."/>
            <person name="Brettin T.S."/>
        </authorList>
    </citation>
    <scope>NUCLEOTIDE SEQUENCE [LARGE SCALE GENOMIC DNA]</scope>
    <source>
        <strain>Nepal516</strain>
    </source>
</reference>
<accession>Q1CLC7</accession>
<accession>C4GQE2</accession>
<keyword id="KW-0028">Amino-acid biosynthesis</keyword>
<keyword id="KW-0067">ATP-binding</keyword>
<keyword id="KW-0963">Cytoplasm</keyword>
<keyword id="KW-0418">Kinase</keyword>
<keyword id="KW-0547">Nucleotide-binding</keyword>
<keyword id="KW-0641">Proline biosynthesis</keyword>
<keyword id="KW-0808">Transferase</keyword>
<comment type="function">
    <text evidence="1">Catalyzes the transfer of a phosphate group to glutamate to form L-glutamate 5-phosphate.</text>
</comment>
<comment type="catalytic activity">
    <reaction evidence="1">
        <text>L-glutamate + ATP = L-glutamyl 5-phosphate + ADP</text>
        <dbReference type="Rhea" id="RHEA:14877"/>
        <dbReference type="ChEBI" id="CHEBI:29985"/>
        <dbReference type="ChEBI" id="CHEBI:30616"/>
        <dbReference type="ChEBI" id="CHEBI:58274"/>
        <dbReference type="ChEBI" id="CHEBI:456216"/>
        <dbReference type="EC" id="2.7.2.11"/>
    </reaction>
</comment>
<comment type="pathway">
    <text evidence="1">Amino-acid biosynthesis; L-proline biosynthesis; L-glutamate 5-semialdehyde from L-glutamate: step 1/2.</text>
</comment>
<comment type="subcellular location">
    <subcellularLocation>
        <location evidence="1">Cytoplasm</location>
    </subcellularLocation>
</comment>
<comment type="similarity">
    <text evidence="1">Belongs to the glutamate 5-kinase family.</text>
</comment>
<sequence>MSGSQTLVVKLGTSVLTGGSRRLNRAHIVELVRQCAQQHAKGHRIVIVTSGAIAAGREHLGYPELPATIASKQLLAAVGQSRLIQLWEQLFSIYGIHIGQMLLTRADLEDRERFLNARDTMNALLDNRIVPVINENDAVATAEIKVGDNDNLSALAAILASADKLLLLTDQAGLYTADPRNNPEAELIREVHGIDDVLRGMAGDSVSGLGTGGMATKLQAADVACRAGIDVVIAAGSQVGVIADVIDGTPVGTRFHSLETPLENRKRWIFGAPPAGEITVDDGAVFAIMERGSSLLPKGIRSVKGDFSRGEVIRIRNLNGRDLAHGVSRYNSDALRMLAGHHSQQISEILGYEYGPVAVHRDDMIVS</sequence>
<organism>
    <name type="scientific">Yersinia pestis bv. Antiqua (strain Nepal516)</name>
    <dbReference type="NCBI Taxonomy" id="377628"/>
    <lineage>
        <taxon>Bacteria</taxon>
        <taxon>Pseudomonadati</taxon>
        <taxon>Pseudomonadota</taxon>
        <taxon>Gammaproteobacteria</taxon>
        <taxon>Enterobacterales</taxon>
        <taxon>Yersiniaceae</taxon>
        <taxon>Yersinia</taxon>
    </lineage>
</organism>